<feature type="chain" id="PRO_0000197695" description="Rhodopsin">
    <location>
        <begin position="1"/>
        <end position="354"/>
    </location>
</feature>
<feature type="topological domain" description="Extracellular" evidence="9">
    <location>
        <begin position="1"/>
        <end position="36"/>
    </location>
</feature>
<feature type="transmembrane region" description="Helical; Name=1" evidence="2">
    <location>
        <begin position="37"/>
        <end position="61"/>
    </location>
</feature>
<feature type="topological domain" description="Cytoplasmic" evidence="9">
    <location>
        <begin position="62"/>
        <end position="73"/>
    </location>
</feature>
<feature type="transmembrane region" description="Helical; Name=2" evidence="2">
    <location>
        <begin position="74"/>
        <end position="96"/>
    </location>
</feature>
<feature type="topological domain" description="Extracellular" evidence="9">
    <location>
        <begin position="97"/>
        <end position="110"/>
    </location>
</feature>
<feature type="transmembrane region" description="Helical; Name=3" evidence="2">
    <location>
        <begin position="111"/>
        <end position="133"/>
    </location>
</feature>
<feature type="topological domain" description="Cytoplasmic" evidence="9">
    <location>
        <begin position="134"/>
        <end position="152"/>
    </location>
</feature>
<feature type="transmembrane region" description="Helical; Name=4" evidence="2">
    <location>
        <begin position="153"/>
        <end position="173"/>
    </location>
</feature>
<feature type="topological domain" description="Extracellular" evidence="9">
    <location>
        <begin position="174"/>
        <end position="202"/>
    </location>
</feature>
<feature type="transmembrane region" description="Helical; Name=5" evidence="2">
    <location>
        <begin position="203"/>
        <end position="224"/>
    </location>
</feature>
<feature type="topological domain" description="Cytoplasmic" evidence="9">
    <location>
        <begin position="225"/>
        <end position="252"/>
    </location>
</feature>
<feature type="transmembrane region" description="Helical; Name=6" evidence="2">
    <location>
        <begin position="253"/>
        <end position="274"/>
    </location>
</feature>
<feature type="topological domain" description="Extracellular" evidence="9">
    <location>
        <begin position="275"/>
        <end position="286"/>
    </location>
</feature>
<feature type="transmembrane region" description="Helical; Name=7" evidence="2">
    <location>
        <begin position="287"/>
        <end position="308"/>
    </location>
</feature>
<feature type="topological domain" description="Cytoplasmic" evidence="9">
    <location>
        <begin position="309"/>
        <end position="354"/>
    </location>
</feature>
<feature type="region of interest" description="Disordered" evidence="7">
    <location>
        <begin position="332"/>
        <end position="354"/>
    </location>
</feature>
<feature type="short sequence motif" description="'Ionic lock' involved in activated form stabilization" evidence="2">
    <location>
        <begin position="134"/>
        <end position="136"/>
    </location>
</feature>
<feature type="compositionally biased region" description="Low complexity" evidence="7">
    <location>
        <begin position="334"/>
        <end position="354"/>
    </location>
</feature>
<feature type="site" description="Plays an important role in the conformation switch to the active conformation" evidence="2">
    <location>
        <position position="113"/>
    </location>
</feature>
<feature type="modified residue" description="N6-(retinylidene)lysine" evidence="2">
    <location>
        <position position="296"/>
    </location>
</feature>
<feature type="lipid moiety-binding region" description="S-palmitoyl cysteine" evidence="2">
    <location>
        <position position="322"/>
    </location>
</feature>
<feature type="lipid moiety-binding region" description="S-palmitoyl cysteine" evidence="2">
    <location>
        <position position="323"/>
    </location>
</feature>
<feature type="glycosylation site" description="N-linked (GlcNAc...) asparagine" evidence="1">
    <location>
        <position position="2"/>
    </location>
</feature>
<feature type="glycosylation site" description="N-linked (GlcNAc...) asparagine" evidence="1">
    <location>
        <position position="15"/>
    </location>
</feature>
<feature type="disulfide bond" evidence="6">
    <location>
        <begin position="110"/>
        <end position="187"/>
    </location>
</feature>
<accession>P87369</accession>
<organism>
    <name type="scientific">Oryzias latipes</name>
    <name type="common">Japanese rice fish</name>
    <name type="synonym">Japanese killifish</name>
    <dbReference type="NCBI Taxonomy" id="8090"/>
    <lineage>
        <taxon>Eukaryota</taxon>
        <taxon>Metazoa</taxon>
        <taxon>Chordata</taxon>
        <taxon>Craniata</taxon>
        <taxon>Vertebrata</taxon>
        <taxon>Euteleostomi</taxon>
        <taxon>Actinopterygii</taxon>
        <taxon>Neopterygii</taxon>
        <taxon>Teleostei</taxon>
        <taxon>Neoteleostei</taxon>
        <taxon>Acanthomorphata</taxon>
        <taxon>Ovalentaria</taxon>
        <taxon>Atherinomorphae</taxon>
        <taxon>Beloniformes</taxon>
        <taxon>Adrianichthyidae</taxon>
        <taxon>Oryziinae</taxon>
        <taxon>Oryzias</taxon>
    </lineage>
</organism>
<sequence length="354" mass="39479">MNGTEGPYFNVPMVNTTGIVRSPYEYPQYYLVSPAAYAALGAYMFFLILVGFPINFLTLYVTLEHKKLRTPLNYILLNLAVADLFMVFGGFTTTMYTSMHGYFVLGRLGCNLEGFFATLGGEIGLWSLVVLAIERWVVVCKPISNFRFGENHAIMGLVFTWIMAASCAVPPLVGWSRYIPEGMQCSCGVDYYTRAEGFNNESFVVYMFVCHFLIPLIVVFFCYGRLLCAVKEAAAAQQESETTQRAEREVTRMVVIMVIGFLVCWLPYASVAWYIFTNQGSEFGPLFMTIPAFFAKSSSIYNPAIYICMNKQFRNCMITTLCCGKNPFEEEEGASTTASKTEASSVSSSSVSPA</sequence>
<keyword id="KW-0966">Cell projection</keyword>
<keyword id="KW-0157">Chromophore</keyword>
<keyword id="KW-1015">Disulfide bond</keyword>
<keyword id="KW-0297">G-protein coupled receptor</keyword>
<keyword id="KW-0325">Glycoprotein</keyword>
<keyword id="KW-0449">Lipoprotein</keyword>
<keyword id="KW-0472">Membrane</keyword>
<keyword id="KW-0564">Palmitate</keyword>
<keyword id="KW-0597">Phosphoprotein</keyword>
<keyword id="KW-0600">Photoreceptor protein</keyword>
<keyword id="KW-0675">Receptor</keyword>
<keyword id="KW-1185">Reference proteome</keyword>
<keyword id="KW-0681">Retinal protein</keyword>
<keyword id="KW-0716">Sensory transduction</keyword>
<keyword id="KW-0807">Transducer</keyword>
<keyword id="KW-0812">Transmembrane</keyword>
<keyword id="KW-1133">Transmembrane helix</keyword>
<keyword id="KW-0844">Vision</keyword>
<evidence type="ECO:0000250" key="1"/>
<evidence type="ECO:0000250" key="2">
    <source>
        <dbReference type="UniProtKB" id="P02699"/>
    </source>
</evidence>
<evidence type="ECO:0000250" key="3">
    <source>
        <dbReference type="UniProtKB" id="P08100"/>
    </source>
</evidence>
<evidence type="ECO:0000250" key="4">
    <source>
        <dbReference type="UniProtKB" id="P32309"/>
    </source>
</evidence>
<evidence type="ECO:0000250" key="5">
    <source>
        <dbReference type="UniProtKB" id="P35359"/>
    </source>
</evidence>
<evidence type="ECO:0000255" key="6">
    <source>
        <dbReference type="PROSITE-ProRule" id="PRU00521"/>
    </source>
</evidence>
<evidence type="ECO:0000256" key="7">
    <source>
        <dbReference type="SAM" id="MobiDB-lite"/>
    </source>
</evidence>
<evidence type="ECO:0000269" key="8">
    <source>
    </source>
</evidence>
<evidence type="ECO:0000305" key="9"/>
<proteinExistence type="evidence at protein level"/>
<reference key="1">
    <citation type="submission" date="1997-03" db="EMBL/GenBank/DDBJ databases">
        <authorList>
            <person name="Hisatomi O."/>
            <person name="Satoh T."/>
            <person name="Tokunaga F."/>
        </authorList>
    </citation>
    <scope>NUCLEOTIDE SEQUENCE [MRNA]</scope>
    <source>
        <tissue>Retina</tissue>
    </source>
</reference>
<reference key="2">
    <citation type="journal article" date="2008" name="Photochem. Photobiol.">
        <title>Presence of rhodopsin and porphyropsin in the eyes of 164 fishes, representing marine, diadromous, coastal and freshwater species--a qualitative and comparative study.</title>
        <authorList>
            <person name="Toyama M."/>
            <person name="Hironaka M."/>
            <person name="Yamahama Y."/>
            <person name="Horiguchi H."/>
            <person name="Tsukada O."/>
            <person name="Uto N."/>
            <person name="Ueno Y."/>
            <person name="Tokunaga F."/>
            <person name="Seno K."/>
            <person name="Hariyama T."/>
        </authorList>
    </citation>
    <scope>RETINAL-BINDING</scope>
    <scope>FUNCTION</scope>
</reference>
<protein>
    <recommendedName>
        <fullName>Rhodopsin</fullName>
    </recommendedName>
    <alternativeName>
        <fullName>KFH-RH</fullName>
    </alternativeName>
</protein>
<comment type="function">
    <text evidence="2 3 4 8">Photoreceptor required for image-forming vision at low light intensity. While most salt water fish species use retinal as chromophore, most freshwater fish use 3-dehydroretinal, or a mixture of retinal and 3-dehydroretinal (PubMed:18422881). Light-induced isomerization of 11-cis to all-trans retinal triggers a conformational change that activates signaling via G-proteins. Subsequent receptor phosphorylation mediates displacement of the bound G-protein alpha subunit by arrestin and terminates signaling (By similarity).</text>
</comment>
<comment type="subcellular location">
    <subcellularLocation>
        <location evidence="3">Membrane</location>
        <topology evidence="3">Multi-pass membrane protein</topology>
    </subcellularLocation>
    <subcellularLocation>
        <location evidence="5">Cell projection</location>
        <location evidence="5">Cilium</location>
        <location evidence="5">Photoreceptor outer segment</location>
    </subcellularLocation>
    <text evidence="3">Synthesized in the inner segment (IS) of rod photoreceptor cells before vectorial transport to disk membranes in the rod outer segment (OS) photosensory cilia.</text>
</comment>
<comment type="PTM">
    <text evidence="2">Phosphorylated on some or all of the serine and threonine residues present in the C-terminal region.</text>
</comment>
<comment type="PTM">
    <text evidence="2">Contains one covalently linked retinal chromophore.</text>
</comment>
<comment type="similarity">
    <text evidence="6">Belongs to the G-protein coupled receptor 1 family. Opsin subfamily.</text>
</comment>
<gene>
    <name type="primary">rho</name>
</gene>
<dbReference type="EMBL" id="AB001606">
    <property type="protein sequence ID" value="BAA19423.1"/>
    <property type="molecule type" value="mRNA"/>
</dbReference>
<dbReference type="RefSeq" id="NP_001098165.1">
    <property type="nucleotide sequence ID" value="NM_001104695.1"/>
</dbReference>
<dbReference type="SMR" id="P87369"/>
<dbReference type="FunCoup" id="P87369">
    <property type="interactions" value="251"/>
</dbReference>
<dbReference type="STRING" id="8090.ENSORLP00000013288"/>
<dbReference type="GlyCosmos" id="P87369">
    <property type="glycosylation" value="2 sites, No reported glycans"/>
</dbReference>
<dbReference type="GeneID" id="100049259"/>
<dbReference type="KEGG" id="ola:100049259"/>
<dbReference type="CTD" id="6010"/>
<dbReference type="eggNOG" id="KOG3656">
    <property type="taxonomic scope" value="Eukaryota"/>
</dbReference>
<dbReference type="InParanoid" id="P87369"/>
<dbReference type="OrthoDB" id="5962323at2759"/>
<dbReference type="Proteomes" id="UP000001038">
    <property type="component" value="Unplaced"/>
</dbReference>
<dbReference type="Proteomes" id="UP000265180">
    <property type="component" value="Chromosome 9"/>
</dbReference>
<dbReference type="Proteomes" id="UP000265200">
    <property type="component" value="Chromosome 9"/>
</dbReference>
<dbReference type="GO" id="GO:0016020">
    <property type="term" value="C:membrane"/>
    <property type="evidence" value="ECO:0000250"/>
    <property type="project" value="UniProtKB"/>
</dbReference>
<dbReference type="GO" id="GO:0097381">
    <property type="term" value="C:photoreceptor disc membrane"/>
    <property type="evidence" value="ECO:0000250"/>
    <property type="project" value="UniProtKB"/>
</dbReference>
<dbReference type="GO" id="GO:0001750">
    <property type="term" value="C:photoreceptor outer segment"/>
    <property type="evidence" value="ECO:0000318"/>
    <property type="project" value="GO_Central"/>
</dbReference>
<dbReference type="GO" id="GO:0005886">
    <property type="term" value="C:plasma membrane"/>
    <property type="evidence" value="ECO:0000250"/>
    <property type="project" value="UniProtKB"/>
</dbReference>
<dbReference type="GO" id="GO:0005502">
    <property type="term" value="F:11-cis retinal binding"/>
    <property type="evidence" value="ECO:0000250"/>
    <property type="project" value="UniProtKB"/>
</dbReference>
<dbReference type="GO" id="GO:0008020">
    <property type="term" value="F:G protein-coupled photoreceptor activity"/>
    <property type="evidence" value="ECO:0000250"/>
    <property type="project" value="UniProtKB"/>
</dbReference>
<dbReference type="GO" id="GO:0016038">
    <property type="term" value="P:absorption of visible light"/>
    <property type="evidence" value="ECO:0000250"/>
    <property type="project" value="UniProtKB"/>
</dbReference>
<dbReference type="GO" id="GO:0071482">
    <property type="term" value="P:cellular response to light stimulus"/>
    <property type="evidence" value="ECO:0000318"/>
    <property type="project" value="GO_Central"/>
</dbReference>
<dbReference type="GO" id="GO:0016056">
    <property type="term" value="P:G protein-coupled opsin signaling pathway"/>
    <property type="evidence" value="ECO:0000250"/>
    <property type="project" value="UniProtKB"/>
</dbReference>
<dbReference type="GO" id="GO:0007186">
    <property type="term" value="P:G protein-coupled receptor signaling pathway"/>
    <property type="evidence" value="ECO:0000318"/>
    <property type="project" value="GO_Central"/>
</dbReference>
<dbReference type="GO" id="GO:0007602">
    <property type="term" value="P:phototransduction"/>
    <property type="evidence" value="ECO:0000318"/>
    <property type="project" value="GO_Central"/>
</dbReference>
<dbReference type="GO" id="GO:0007601">
    <property type="term" value="P:visual perception"/>
    <property type="evidence" value="ECO:0007669"/>
    <property type="project" value="UniProtKB-KW"/>
</dbReference>
<dbReference type="CDD" id="cd15080">
    <property type="entry name" value="7tmA_MWS_opsin"/>
    <property type="match status" value="1"/>
</dbReference>
<dbReference type="FunFam" id="1.20.1070.10:FF:000018">
    <property type="entry name" value="Rhodopsin"/>
    <property type="match status" value="1"/>
</dbReference>
<dbReference type="Gene3D" id="1.20.1070.10">
    <property type="entry name" value="Rhodopsin 7-helix transmembrane proteins"/>
    <property type="match status" value="1"/>
</dbReference>
<dbReference type="InterPro" id="IPR050125">
    <property type="entry name" value="GPCR_opsins"/>
</dbReference>
<dbReference type="InterPro" id="IPR000276">
    <property type="entry name" value="GPCR_Rhodpsn"/>
</dbReference>
<dbReference type="InterPro" id="IPR017452">
    <property type="entry name" value="GPCR_Rhodpsn_7TM"/>
</dbReference>
<dbReference type="InterPro" id="IPR001760">
    <property type="entry name" value="Opsin"/>
</dbReference>
<dbReference type="InterPro" id="IPR027430">
    <property type="entry name" value="Retinal_BS"/>
</dbReference>
<dbReference type="InterPro" id="IPR000732">
    <property type="entry name" value="Rhodopsin"/>
</dbReference>
<dbReference type="InterPro" id="IPR019477">
    <property type="entry name" value="Rhodopsin_N"/>
</dbReference>
<dbReference type="PANTHER" id="PTHR24240">
    <property type="entry name" value="OPSIN"/>
    <property type="match status" value="1"/>
</dbReference>
<dbReference type="Pfam" id="PF00001">
    <property type="entry name" value="7tm_1"/>
    <property type="match status" value="1"/>
</dbReference>
<dbReference type="Pfam" id="PF10413">
    <property type="entry name" value="Rhodopsin_N"/>
    <property type="match status" value="1"/>
</dbReference>
<dbReference type="PRINTS" id="PR00237">
    <property type="entry name" value="GPCRRHODOPSN"/>
</dbReference>
<dbReference type="PRINTS" id="PR00238">
    <property type="entry name" value="OPSIN"/>
</dbReference>
<dbReference type="PRINTS" id="PR00579">
    <property type="entry name" value="RHODOPSIN"/>
</dbReference>
<dbReference type="SUPFAM" id="SSF81321">
    <property type="entry name" value="Family A G protein-coupled receptor-like"/>
    <property type="match status" value="1"/>
</dbReference>
<dbReference type="PROSITE" id="PS00237">
    <property type="entry name" value="G_PROTEIN_RECEP_F1_1"/>
    <property type="match status" value="1"/>
</dbReference>
<dbReference type="PROSITE" id="PS50262">
    <property type="entry name" value="G_PROTEIN_RECEP_F1_2"/>
    <property type="match status" value="1"/>
</dbReference>
<dbReference type="PROSITE" id="PS00238">
    <property type="entry name" value="OPSIN"/>
    <property type="match status" value="1"/>
</dbReference>
<name>OPSD_ORYLA</name>